<feature type="chain" id="PRO_0000190041" description="Protein unc-93 homolog B1">
    <location>
        <begin position="1"/>
        <end position="598"/>
    </location>
</feature>
<feature type="transmembrane region" description="Helical" evidence="3">
    <location>
        <begin position="64"/>
        <end position="84"/>
    </location>
</feature>
<feature type="transmembrane region" description="Helical" evidence="3">
    <location>
        <begin position="110"/>
        <end position="130"/>
    </location>
</feature>
<feature type="transmembrane region" description="Helical" evidence="3">
    <location>
        <begin position="132"/>
        <end position="152"/>
    </location>
</feature>
<feature type="transmembrane region" description="Helical" evidence="3">
    <location>
        <begin position="160"/>
        <end position="180"/>
    </location>
</feature>
<feature type="transmembrane region" description="Helical" evidence="3">
    <location>
        <begin position="223"/>
        <end position="243"/>
    </location>
</feature>
<feature type="transmembrane region" description="Helical" evidence="3">
    <location>
        <begin position="285"/>
        <end position="305"/>
    </location>
</feature>
<feature type="transmembrane region" description="Helical" evidence="3">
    <location>
        <begin position="343"/>
        <end position="363"/>
    </location>
</feature>
<feature type="transmembrane region" description="Helical" evidence="3">
    <location>
        <begin position="378"/>
        <end position="398"/>
    </location>
</feature>
<feature type="transmembrane region" description="Helical" evidence="3">
    <location>
        <begin position="403"/>
        <end position="423"/>
    </location>
</feature>
<feature type="transmembrane region" description="Helical" evidence="3">
    <location>
        <begin position="428"/>
        <end position="448"/>
    </location>
</feature>
<feature type="transmembrane region" description="Helical" evidence="3">
    <location>
        <begin position="469"/>
        <end position="489"/>
    </location>
</feature>
<feature type="transmembrane region" description="Helical" evidence="3">
    <location>
        <begin position="495"/>
        <end position="515"/>
    </location>
</feature>
<feature type="region of interest" description="Disordered" evidence="4">
    <location>
        <begin position="1"/>
        <end position="36"/>
    </location>
</feature>
<feature type="region of interest" description="Disordered" evidence="4">
    <location>
        <begin position="524"/>
        <end position="598"/>
    </location>
</feature>
<feature type="compositionally biased region" description="Acidic residues" evidence="4">
    <location>
        <begin position="544"/>
        <end position="554"/>
    </location>
</feature>
<feature type="modified residue" description="Phosphoserine" evidence="2">
    <location>
        <position position="547"/>
    </location>
</feature>
<feature type="modified residue" description="Phosphoserine" evidence="2">
    <location>
        <position position="550"/>
    </location>
</feature>
<feature type="glycosylation site" description="N-linked (GlcNAc...) asparagine" evidence="3">
    <location>
        <position position="251"/>
    </location>
</feature>
<feature type="glycosylation site" description="N-linked (GlcNAc...) asparagine" evidence="3">
    <location>
        <position position="272"/>
    </location>
</feature>
<feature type="glycosylation site" description="N-linked (GlcNAc...) asparagine" evidence="3">
    <location>
        <position position="449"/>
    </location>
</feature>
<feature type="splice variant" id="VSP_014036" description="In isoform 2." evidence="11">
    <location>
        <begin position="1"/>
        <end position="292"/>
    </location>
</feature>
<feature type="mutagenesis site" description="Increases the TLR7 response and decreases the TLR9 response. Enhances interaction with TLR7, TLR8 and TLR13 and TLR7 transport to endolysosomes in presence of single-stranded RNA. Decreases affinity for TLR9 and its transport to endolysosomes in presence of DNA." evidence="8">
    <original>D</original>
    <variation>A</variation>
    <location>
        <position position="34"/>
    </location>
</feature>
<feature type="mutagenesis site" description="Increases the TLR7 response and decreases the TLR9 response.">
    <original>L</original>
    <variation>A</variation>
    <location>
        <position position="36"/>
    </location>
</feature>
<feature type="mutagenesis site" description="No effect on interaction with TLR3." evidence="9">
    <original>F</original>
    <variation>A</variation>
    <variation>W</variation>
    <location>
        <position position="133"/>
    </location>
</feature>
<feature type="mutagenesis site" description="No effect on interaction with TLR3." evidence="9">
    <original>W</original>
    <variation>A</variation>
    <location>
        <position position="137"/>
    </location>
</feature>
<feature type="mutagenesis site" description="Decreases interaction with TLR3." evidence="9">
    <original>F</original>
    <variation>A</variation>
    <location>
        <position position="140"/>
    </location>
</feature>
<feature type="mutagenesis site" description="Increases interaction with TLR3." evidence="9">
    <original>F</original>
    <variation>W</variation>
    <location>
        <position position="140"/>
    </location>
</feature>
<feature type="mutagenesis site" description="Decreases interaction with TLR3." evidence="9">
    <original>A</original>
    <variation>W</variation>
    <location>
        <position position="147"/>
    </location>
</feature>
<feature type="mutagenesis site" description="No effect on interaction with TLR3." evidence="9">
    <original>L</original>
    <variation>A</variation>
    <location>
        <position position="148"/>
    </location>
</feature>
<feature type="mutagenesis site" description="Increases interaction with TLR3." evidence="9">
    <original>L</original>
    <variation>W</variation>
    <location>
        <position position="148"/>
    </location>
</feature>
<feature type="mutagenesis site" description="Strongly decreases interaction with TLR3." evidence="9">
    <original>S</original>
    <variation>A</variation>
    <variation>W</variation>
    <location>
        <position position="151"/>
    </location>
</feature>
<feature type="mutagenesis site" description="Strongly decreases interaction with TLR3." evidence="9">
    <original>Y</original>
    <variation>A</variation>
    <variation>W</variation>
    <location>
        <position position="154"/>
    </location>
</feature>
<feature type="mutagenesis site" description="Decreases interaction with TLR3." evidence="9">
    <original>W</original>
    <variation>A</variation>
    <location>
        <position position="155"/>
    </location>
</feature>
<feature type="mutagenesis site" description="Decreases interaction with TLR3." evidence="9">
    <original>T</original>
    <variation>A</variation>
    <variation>W</variation>
    <location>
        <position position="160"/>
    </location>
</feature>
<feature type="mutagenesis site" description="Strongly decreases interaction with TLR3." evidence="9">
    <original>R</original>
    <variation>A</variation>
    <location>
        <position position="281"/>
    </location>
</feature>
<feature type="mutagenesis site" description="No effect on interaction with TLR3." evidence="9">
    <original>R</original>
    <variation>W</variation>
    <location>
        <position position="281"/>
    </location>
</feature>
<feature type="mutagenesis site" description="No effect on interaction with TLR3." evidence="9">
    <original>S</original>
    <variation>W</variation>
    <location>
        <position position="282"/>
    </location>
</feature>
<feature type="mutagenesis site" description="No effect on interaction with TLR3." evidence="9">
    <original>I</original>
    <variation>A</variation>
    <variation>W</variation>
    <location>
        <position position="286"/>
    </location>
</feature>
<feature type="mutagenesis site" description="No effect on interaction with TLR3." evidence="9">
    <original>F</original>
    <variation>W</variation>
    <location>
        <position position="297"/>
    </location>
</feature>
<feature type="mutagenesis site" description="No effect on interaction with TLR3." evidence="9">
    <original>M</original>
    <variation>A</variation>
    <variation>W</variation>
    <location>
        <position position="300"/>
    </location>
</feature>
<feature type="mutagenesis site" description="Loss of function in TLR signaling. Impaired in its own transport from endoplasmic reticulum to endosome, lysosome and phagosome. Loss of the interaction with TLR3, TLR7, TLR9 and TLR13 and of the ability to transport them to endolysosome." evidence="5">
    <original>H</original>
    <variation>R</variation>
    <location>
        <position position="412"/>
    </location>
</feature>
<feature type="sequence conflict" description="In Ref. 4; AAC36530." evidence="12" ref="4">
    <original>GN</original>
    <variation>RS</variation>
    <location>
        <begin position="325"/>
        <end position="326"/>
    </location>
</feature>
<feature type="sequence conflict" description="In Ref. 4; AAC36530." evidence="12" ref="4">
    <original>F</original>
    <variation>S</variation>
    <location>
        <position position="338"/>
    </location>
</feature>
<feature type="sequence conflict" description="In Ref. 4; AAC36530." evidence="12" ref="4">
    <original>F</original>
    <variation>L</variation>
    <location>
        <position position="347"/>
    </location>
</feature>
<feature type="sequence conflict" description="In Ref. 4; AAC36530." evidence="12" ref="4">
    <original>I</original>
    <variation>T</variation>
    <location>
        <position position="380"/>
    </location>
</feature>
<feature type="sequence conflict" description="In Ref. 4; AAC36530." evidence="12" ref="4">
    <original>RSV</original>
    <variation>HSA</variation>
    <location>
        <begin position="401"/>
        <end position="403"/>
    </location>
</feature>
<feature type="sequence conflict" description="In Ref. 2; AAH18388/AAH23731/AAH25587." evidence="12" ref="2">
    <original>A</original>
    <variation>T</variation>
    <location>
        <position position="574"/>
    </location>
</feature>
<feature type="helix" evidence="15">
    <location>
        <begin position="47"/>
        <end position="88"/>
    </location>
</feature>
<feature type="strand" evidence="15">
    <location>
        <begin position="90"/>
        <end position="92"/>
    </location>
</feature>
<feature type="helix" evidence="15">
    <location>
        <begin position="93"/>
        <end position="96"/>
    </location>
</feature>
<feature type="turn" evidence="15">
    <location>
        <begin position="97"/>
        <end position="99"/>
    </location>
</feature>
<feature type="helix" evidence="15">
    <location>
        <begin position="104"/>
        <end position="117"/>
    </location>
</feature>
<feature type="helix" evidence="15">
    <location>
        <begin position="119"/>
        <end position="124"/>
    </location>
</feature>
<feature type="helix" evidence="15">
    <location>
        <begin position="127"/>
        <end position="133"/>
    </location>
</feature>
<feature type="helix" evidence="15">
    <location>
        <begin position="135"/>
        <end position="151"/>
    </location>
</feature>
<feature type="turn" evidence="15">
    <location>
        <begin position="152"/>
        <end position="155"/>
    </location>
</feature>
<feature type="helix" evidence="15">
    <location>
        <begin position="158"/>
        <end position="198"/>
    </location>
</feature>
<feature type="strand" evidence="15">
    <location>
        <begin position="200"/>
        <end position="203"/>
    </location>
</feature>
<feature type="helix" evidence="15">
    <location>
        <begin position="214"/>
        <end position="234"/>
    </location>
</feature>
<feature type="helix" evidence="15">
    <location>
        <begin position="237"/>
        <end position="241"/>
    </location>
</feature>
<feature type="turn" evidence="15">
    <location>
        <begin position="242"/>
        <end position="245"/>
    </location>
</feature>
<feature type="helix" evidence="15">
    <location>
        <begin position="250"/>
        <end position="253"/>
    </location>
</feature>
<feature type="turn" evidence="15">
    <location>
        <begin position="254"/>
        <end position="256"/>
    </location>
</feature>
<feature type="strand" evidence="15">
    <location>
        <begin position="265"/>
        <end position="270"/>
    </location>
</feature>
<feature type="strand" evidence="15">
    <location>
        <begin position="276"/>
        <end position="278"/>
    </location>
</feature>
<feature type="helix" evidence="15">
    <location>
        <begin position="282"/>
        <end position="306"/>
    </location>
</feature>
<feature type="helix" evidence="15">
    <location>
        <begin position="313"/>
        <end position="320"/>
    </location>
</feature>
<feature type="strand" evidence="15">
    <location>
        <begin position="324"/>
        <end position="326"/>
    </location>
</feature>
<feature type="turn" evidence="15">
    <location>
        <begin position="327"/>
        <end position="329"/>
    </location>
</feature>
<feature type="helix" evidence="15">
    <location>
        <begin position="330"/>
        <end position="333"/>
    </location>
</feature>
<feature type="helix" evidence="15">
    <location>
        <begin position="334"/>
        <end position="336"/>
    </location>
</feature>
<feature type="helix" evidence="15">
    <location>
        <begin position="340"/>
        <end position="358"/>
    </location>
</feature>
<feature type="turn" evidence="15">
    <location>
        <begin position="359"/>
        <end position="367"/>
    </location>
</feature>
<feature type="strand" evidence="15">
    <location>
        <begin position="368"/>
        <end position="370"/>
    </location>
</feature>
<feature type="helix" evidence="15">
    <location>
        <begin position="375"/>
        <end position="394"/>
    </location>
</feature>
<feature type="turn" evidence="15">
    <location>
        <begin position="395"/>
        <end position="397"/>
    </location>
</feature>
<feature type="helix" evidence="15">
    <location>
        <begin position="404"/>
        <end position="418"/>
    </location>
</feature>
<feature type="helix" evidence="15">
    <location>
        <begin position="433"/>
        <end position="460"/>
    </location>
</feature>
<feature type="helix" evidence="15">
    <location>
        <begin position="464"/>
        <end position="487"/>
    </location>
</feature>
<feature type="helix" evidence="15">
    <location>
        <begin position="495"/>
        <end position="516"/>
    </location>
</feature>
<feature type="turn" evidence="15">
    <location>
        <begin position="517"/>
        <end position="519"/>
    </location>
</feature>
<sequence length="598" mass="66981">MEVEPPLYPVAGAAGPQGDEDRHGVPDGPEAPLDELVGAYPNYNEEEEERRYYRRKRLGVVKNVLAASTGVTLTYGVYLGLLQMQLILHYDETYREVKYGNMGLPDIDSKMLMGINVTPIAALLYTPVLIRFFGTKWMMFLAVGIYALFVSTNYWERYYTLVPSAVALGMAIVPLWASMGNYITRMSQKYYEYSHYKEQDEQGPQQRPPRGSHAPYLLVFQAIFYSFFHLSFACAQLPMIYFLNNYLYDLNHTLINVQSCGTKSQGILNGFNKTVLRTLPRSKNLIVVESVLMAVAFLAMLMVLGLCGAAYRPTEEIDLRSVGWGNIFQLPFKHVRDFRLRHLVPFFIYSGFEVLFACTGFALGYGVCSMGLERLAYLLIAYSLGASASSVLGLLGLWLPRSVPLVAGAGLHLLLTLSLFFWAPAPRVLQHSWIFYFVAALWGVGSALNKTGLSTLLGILYEDKERQDFIFTIYHWWQAVAIFVVYLGSSLPMKAKLAVLLVTLVAAAASYLWMEQKLQQGLVPRQPRIPKPQHKVRGYRYLEEDNSDESDMEGEQGQGDCAEDEAPQAGPLGAEPAGPCRKPCPYEQALGGDGPEEQ</sequence>
<evidence type="ECO:0000250" key="1"/>
<evidence type="ECO:0000250" key="2">
    <source>
        <dbReference type="UniProtKB" id="Q9H1C4"/>
    </source>
</evidence>
<evidence type="ECO:0000255" key="3"/>
<evidence type="ECO:0000256" key="4">
    <source>
        <dbReference type="SAM" id="MobiDB-lite"/>
    </source>
</evidence>
<evidence type="ECO:0000269" key="5">
    <source>
    </source>
</evidence>
<evidence type="ECO:0000269" key="6">
    <source>
    </source>
</evidence>
<evidence type="ECO:0000269" key="7">
    <source>
    </source>
</evidence>
<evidence type="ECO:0000269" key="8">
    <source>
    </source>
</evidence>
<evidence type="ECO:0000269" key="9">
    <source>
    </source>
</evidence>
<evidence type="ECO:0000269" key="10">
    <source>
    </source>
</evidence>
<evidence type="ECO:0000303" key="11">
    <source>
    </source>
</evidence>
<evidence type="ECO:0000305" key="12"/>
<evidence type="ECO:0000312" key="13">
    <source>
        <dbReference type="MGI" id="MGI:1859307"/>
    </source>
</evidence>
<evidence type="ECO:0007744" key="14">
    <source>
        <dbReference type="PDB" id="7C77"/>
    </source>
</evidence>
<evidence type="ECO:0007829" key="15">
    <source>
        <dbReference type="PDB" id="7C77"/>
    </source>
</evidence>
<dbReference type="EMBL" id="AK165060">
    <property type="protein sequence ID" value="BAE38019.1"/>
    <property type="molecule type" value="mRNA"/>
</dbReference>
<dbReference type="EMBL" id="BC018388">
    <property type="protein sequence ID" value="AAH18388.1"/>
    <property type="molecule type" value="mRNA"/>
</dbReference>
<dbReference type="EMBL" id="BC023731">
    <property type="protein sequence ID" value="AAH23731.1"/>
    <property type="molecule type" value="mRNA"/>
</dbReference>
<dbReference type="EMBL" id="BC025587">
    <property type="protein sequence ID" value="AAH25587.1"/>
    <property type="status" value="ALT_INIT"/>
    <property type="molecule type" value="mRNA"/>
</dbReference>
<dbReference type="EMBL" id="AJ422144">
    <property type="protein sequence ID" value="CAD19524.1"/>
    <property type="molecule type" value="mRNA"/>
</dbReference>
<dbReference type="EMBL" id="U89424">
    <property type="protein sequence ID" value="AAC36530.1"/>
    <property type="molecule type" value="mRNA"/>
</dbReference>
<dbReference type="CCDS" id="CCDS29404.2">
    <molecule id="Q8VCW4-1"/>
</dbReference>
<dbReference type="RefSeq" id="NP_001154900.1">
    <property type="nucleotide sequence ID" value="NM_001161428.1"/>
</dbReference>
<dbReference type="RefSeq" id="NP_062322.3">
    <molecule id="Q8VCW4-1"/>
    <property type="nucleotide sequence ID" value="NM_019449.3"/>
</dbReference>
<dbReference type="PDB" id="7C77">
    <property type="method" value="EM"/>
    <property type="resolution" value="3.30 A"/>
    <property type="chains" value="B=1-598"/>
</dbReference>
<dbReference type="PDBsum" id="7C77"/>
<dbReference type="EMDB" id="EMD-30294"/>
<dbReference type="SMR" id="Q8VCW4"/>
<dbReference type="BioGRID" id="207660">
    <property type="interactions" value="3"/>
</dbReference>
<dbReference type="CORUM" id="Q8VCW4"/>
<dbReference type="FunCoup" id="Q8VCW4">
    <property type="interactions" value="701"/>
</dbReference>
<dbReference type="IntAct" id="Q8VCW4">
    <property type="interactions" value="27"/>
</dbReference>
<dbReference type="STRING" id="10090.ENSMUSP00000124272"/>
<dbReference type="GlyCosmos" id="Q8VCW4">
    <property type="glycosylation" value="3 sites, No reported glycans"/>
</dbReference>
<dbReference type="GlyGen" id="Q8VCW4">
    <property type="glycosylation" value="4 sites, 1 N-linked glycan (1 site), 1 O-linked glycan (1 site)"/>
</dbReference>
<dbReference type="iPTMnet" id="Q8VCW4"/>
<dbReference type="PhosphoSitePlus" id="Q8VCW4"/>
<dbReference type="SwissPalm" id="Q8VCW4"/>
<dbReference type="jPOST" id="Q8VCW4"/>
<dbReference type="PaxDb" id="10090-ENSMUSP00000124272"/>
<dbReference type="PeptideAtlas" id="Q8VCW4"/>
<dbReference type="ProteomicsDB" id="300092">
    <molecule id="Q8VCW4-1"/>
</dbReference>
<dbReference type="ProteomicsDB" id="300093">
    <molecule id="Q8VCW4-2"/>
</dbReference>
<dbReference type="DNASU" id="54445"/>
<dbReference type="Ensembl" id="ENSMUST00000162708.7">
    <molecule id="Q8VCW4-1"/>
    <property type="protein sequence ID" value="ENSMUSP00000124272.3"/>
    <property type="gene ID" value="ENSMUSG00000036908.18"/>
</dbReference>
<dbReference type="GeneID" id="54445"/>
<dbReference type="KEGG" id="mmu:54445"/>
<dbReference type="UCSC" id="uc008fxt.1">
    <molecule id="Q8VCW4-1"/>
    <property type="organism name" value="mouse"/>
</dbReference>
<dbReference type="AGR" id="MGI:1859307"/>
<dbReference type="CTD" id="81622"/>
<dbReference type="MGI" id="MGI:1859307">
    <property type="gene designation" value="Unc93b1"/>
</dbReference>
<dbReference type="eggNOG" id="KOG3097">
    <property type="taxonomic scope" value="Eukaryota"/>
</dbReference>
<dbReference type="GeneTree" id="ENSGT00530000063359"/>
<dbReference type="InParanoid" id="Q8VCW4"/>
<dbReference type="OrthoDB" id="10010517at2759"/>
<dbReference type="Reactome" id="R-MMU-1679131">
    <property type="pathway name" value="Trafficking and processing of endosomal TLR"/>
</dbReference>
<dbReference type="BioGRID-ORCS" id="54445">
    <property type="hits" value="5 hits in 79 CRISPR screens"/>
</dbReference>
<dbReference type="ChiTaRS" id="Unc93b1">
    <property type="organism name" value="mouse"/>
</dbReference>
<dbReference type="PRO" id="PR:Q8VCW4"/>
<dbReference type="Proteomes" id="UP000000589">
    <property type="component" value="Chromosome 19"/>
</dbReference>
<dbReference type="RNAct" id="Q8VCW4">
    <property type="molecule type" value="protein"/>
</dbReference>
<dbReference type="GO" id="GO:0032009">
    <property type="term" value="C:early phagosome"/>
    <property type="evidence" value="ECO:0000314"/>
    <property type="project" value="UniProtKB"/>
</dbReference>
<dbReference type="GO" id="GO:0005783">
    <property type="term" value="C:endoplasmic reticulum"/>
    <property type="evidence" value="ECO:0000314"/>
    <property type="project" value="UniProtKB"/>
</dbReference>
<dbReference type="GO" id="GO:0005789">
    <property type="term" value="C:endoplasmic reticulum membrane"/>
    <property type="evidence" value="ECO:0007669"/>
    <property type="project" value="UniProtKB-SubCell"/>
</dbReference>
<dbReference type="GO" id="GO:0005768">
    <property type="term" value="C:endosome"/>
    <property type="evidence" value="ECO:0000314"/>
    <property type="project" value="UniProtKB"/>
</dbReference>
<dbReference type="GO" id="GO:0005764">
    <property type="term" value="C:lysosome"/>
    <property type="evidence" value="ECO:0000314"/>
    <property type="project" value="UniProtKB"/>
</dbReference>
<dbReference type="GO" id="GO:0035325">
    <property type="term" value="F:Toll-like receptor binding"/>
    <property type="evidence" value="ECO:0000353"/>
    <property type="project" value="UniProtKB"/>
</dbReference>
<dbReference type="GO" id="GO:0019882">
    <property type="term" value="P:antigen processing and presentation"/>
    <property type="evidence" value="ECO:0000315"/>
    <property type="project" value="MGI"/>
</dbReference>
<dbReference type="GO" id="GO:0019886">
    <property type="term" value="P:antigen processing and presentation of exogenous peptide antigen via MHC class II"/>
    <property type="evidence" value="ECO:0000315"/>
    <property type="project" value="MGI"/>
</dbReference>
<dbReference type="GO" id="GO:0000902">
    <property type="term" value="P:cell morphogenesis"/>
    <property type="evidence" value="ECO:0000315"/>
    <property type="project" value="MGI"/>
</dbReference>
<dbReference type="GO" id="GO:0051607">
    <property type="term" value="P:defense response to virus"/>
    <property type="evidence" value="ECO:0007669"/>
    <property type="project" value="UniProtKB-KW"/>
</dbReference>
<dbReference type="GO" id="GO:0045087">
    <property type="term" value="P:innate immune response"/>
    <property type="evidence" value="ECO:0007669"/>
    <property type="project" value="UniProtKB-KW"/>
</dbReference>
<dbReference type="GO" id="GO:0006886">
    <property type="term" value="P:intracellular protein transport"/>
    <property type="evidence" value="ECO:0000315"/>
    <property type="project" value="UniProtKB"/>
</dbReference>
<dbReference type="GO" id="GO:0032735">
    <property type="term" value="P:positive regulation of interleukin-12 production"/>
    <property type="evidence" value="ECO:0000315"/>
    <property type="project" value="MGI"/>
</dbReference>
<dbReference type="GO" id="GO:0032755">
    <property type="term" value="P:positive regulation of interleukin-6 production"/>
    <property type="evidence" value="ECO:0000315"/>
    <property type="project" value="MGI"/>
</dbReference>
<dbReference type="GO" id="GO:0002457">
    <property type="term" value="P:T cell antigen processing and presentation"/>
    <property type="evidence" value="ECO:0000315"/>
    <property type="project" value="MGI"/>
</dbReference>
<dbReference type="GO" id="GO:0034138">
    <property type="term" value="P:toll-like receptor 3 signaling pathway"/>
    <property type="evidence" value="ECO:0000315"/>
    <property type="project" value="UniProtKB"/>
</dbReference>
<dbReference type="GO" id="GO:0034154">
    <property type="term" value="P:toll-like receptor 7 signaling pathway"/>
    <property type="evidence" value="ECO:0000315"/>
    <property type="project" value="UniProtKB"/>
</dbReference>
<dbReference type="GO" id="GO:0034162">
    <property type="term" value="P:toll-like receptor 9 signaling pathway"/>
    <property type="evidence" value="ECO:0000314"/>
    <property type="project" value="UniProtKB"/>
</dbReference>
<dbReference type="GO" id="GO:0002224">
    <property type="term" value="P:toll-like receptor signaling pathway"/>
    <property type="evidence" value="ECO:0000315"/>
    <property type="project" value="MGI"/>
</dbReference>
<dbReference type="CDD" id="cd17408">
    <property type="entry name" value="MFS_unc93B1"/>
    <property type="match status" value="1"/>
</dbReference>
<dbReference type="FunFam" id="1.20.1250.20:FF:001497">
    <property type="entry name" value="Uncharacterized protein"/>
    <property type="match status" value="1"/>
</dbReference>
<dbReference type="InterPro" id="IPR043268">
    <property type="entry name" value="UNC93B1"/>
</dbReference>
<dbReference type="PANTHER" id="PTHR46744">
    <property type="entry name" value="PROTEIN UNC-93 HOMOLOG B1"/>
    <property type="match status" value="1"/>
</dbReference>
<dbReference type="PANTHER" id="PTHR46744:SF1">
    <property type="entry name" value="PROTEIN UNC-93 HOMOLOG B1"/>
    <property type="match status" value="1"/>
</dbReference>
<comment type="function">
    <text evidence="5 6 7">Plays an important role in innate and adaptive immunity by regulating nucleotide-sensing Toll-like receptor (TLR) signaling. Required for the transport of a subset of TLRs (including TLR3, TLR7 and TLR9) from the endoplasmic reticulum to endolysosomes where they can engage pathogen nucleotides and activate signaling cascades. May play a role in autoreactive B-cells removal.</text>
</comment>
<comment type="subunit">
    <text evidence="6 8 9">Interacts with TLR3, TLR5, TLR7, TLR8, TLR9 and TLR13 (probably via transmembrane domain).</text>
</comment>
<comment type="interaction">
    <interactant intactId="EBI-6116986">
        <id>Q8VCW4</id>
    </interactant>
    <interactant intactId="EBI-2873194">
        <id>O96005</id>
        <label>CLPTM1</label>
    </interactant>
    <organismsDiffer>true</organismsDiffer>
    <experiments>2</experiments>
</comment>
<comment type="interaction">
    <interactant intactId="EBI-6116986">
        <id>Q8VCW4</id>
    </interactant>
    <interactant intactId="EBI-358664">
        <id>P51617</id>
        <label>IRAK1</label>
    </interactant>
    <organismsDiffer>true</organismsDiffer>
    <experiments>2</experiments>
</comment>
<comment type="interaction">
    <interactant intactId="EBI-6116986">
        <id>Q8VCW4</id>
    </interactant>
    <interactant intactId="EBI-6116499">
        <id>Q96N66</id>
        <label>MBOAT7</label>
    </interactant>
    <organismsDiffer>true</organismsDiffer>
    <experiments>2</experiments>
</comment>
<comment type="interaction">
    <interactant intactId="EBI-6116986">
        <id>Q8VCW4</id>
    </interactant>
    <interactant intactId="EBI-1044848">
        <id>O15260</id>
        <label>SURF4</label>
    </interactant>
    <organismsDiffer>true</organismsDiffer>
    <experiments>2</experiments>
</comment>
<comment type="subcellular location">
    <subcellularLocation>
        <location>Endoplasmic reticulum membrane</location>
        <topology>Multi-pass membrane protein</topology>
    </subcellularLocation>
    <subcellularLocation>
        <location>Endosome</location>
    </subcellularLocation>
    <subcellularLocation>
        <location>Lysosome</location>
    </subcellularLocation>
    <subcellularLocation>
        <location>Cytoplasmic vesicle</location>
        <location>Phagosome</location>
    </subcellularLocation>
    <text evidence="1">Colocalizes with LAMP5 in large endosomal intracellular vesicles (By similarity). Relocalizes from endoplasmic reticulum to endosome and lysosome upon cell-stimulation with CpG dinucleotides.</text>
</comment>
<comment type="alternative products">
    <event type="alternative splicing"/>
    <isoform>
        <id>Q8VCW4-1</id>
        <name>1</name>
        <sequence type="displayed"/>
    </isoform>
    <isoform>
        <id>Q8VCW4-2</id>
        <name>2</name>
        <sequence type="described" ref="VSP_014036"/>
    </isoform>
</comment>
<comment type="induction">
    <text evidence="10">Upon interleukin-4 treatment in B-cells.</text>
</comment>
<comment type="PTM">
    <text evidence="6">N-glycosylated.</text>
</comment>
<comment type="similarity">
    <text evidence="12">Belongs to the unc-93 family.</text>
</comment>
<comment type="sequence caution" evidence="12">
    <conflict type="erroneous initiation">
        <sequence resource="EMBL-CDS" id="AAH25587"/>
    </conflict>
    <text>Truncated N-terminus.</text>
</comment>
<name>UN93B_MOUSE</name>
<organism>
    <name type="scientific">Mus musculus</name>
    <name type="common">Mouse</name>
    <dbReference type="NCBI Taxonomy" id="10090"/>
    <lineage>
        <taxon>Eukaryota</taxon>
        <taxon>Metazoa</taxon>
        <taxon>Chordata</taxon>
        <taxon>Craniata</taxon>
        <taxon>Vertebrata</taxon>
        <taxon>Euteleostomi</taxon>
        <taxon>Mammalia</taxon>
        <taxon>Eutheria</taxon>
        <taxon>Euarchontoglires</taxon>
        <taxon>Glires</taxon>
        <taxon>Rodentia</taxon>
        <taxon>Myomorpha</taxon>
        <taxon>Muroidea</taxon>
        <taxon>Muridae</taxon>
        <taxon>Murinae</taxon>
        <taxon>Mus</taxon>
        <taxon>Mus</taxon>
    </lineage>
</organism>
<protein>
    <recommendedName>
        <fullName evidence="12">Protein unc-93 homolog B1</fullName>
        <shortName>Unc-93B1</shortName>
    </recommendedName>
</protein>
<keyword id="KW-0002">3D-structure</keyword>
<keyword id="KW-1064">Adaptive immunity</keyword>
<keyword id="KW-0025">Alternative splicing</keyword>
<keyword id="KW-0051">Antiviral defense</keyword>
<keyword id="KW-0968">Cytoplasmic vesicle</keyword>
<keyword id="KW-0256">Endoplasmic reticulum</keyword>
<keyword id="KW-0967">Endosome</keyword>
<keyword id="KW-0325">Glycoprotein</keyword>
<keyword id="KW-0391">Immunity</keyword>
<keyword id="KW-0399">Innate immunity</keyword>
<keyword id="KW-0458">Lysosome</keyword>
<keyword id="KW-0472">Membrane</keyword>
<keyword id="KW-0597">Phosphoprotein</keyword>
<keyword id="KW-1185">Reference proteome</keyword>
<keyword id="KW-0812">Transmembrane</keyword>
<keyword id="KW-1133">Transmembrane helix</keyword>
<accession>Q8VCW4</accession>
<accession>O89077</accession>
<accession>Q3TNR9</accession>
<accession>Q710D2</accession>
<accession>Q8CIK1</accession>
<accession>Q8R3D0</accession>
<proteinExistence type="evidence at protein level"/>
<gene>
    <name evidence="13" type="primary">Unc93b1</name>
    <name type="synonym">Unc93b</name>
</gene>
<reference key="1">
    <citation type="journal article" date="2005" name="Science">
        <title>The transcriptional landscape of the mammalian genome.</title>
        <authorList>
            <person name="Carninci P."/>
            <person name="Kasukawa T."/>
            <person name="Katayama S."/>
            <person name="Gough J."/>
            <person name="Frith M.C."/>
            <person name="Maeda N."/>
            <person name="Oyama R."/>
            <person name="Ravasi T."/>
            <person name="Lenhard B."/>
            <person name="Wells C."/>
            <person name="Kodzius R."/>
            <person name="Shimokawa K."/>
            <person name="Bajic V.B."/>
            <person name="Brenner S.E."/>
            <person name="Batalov S."/>
            <person name="Forrest A.R."/>
            <person name="Zavolan M."/>
            <person name="Davis M.J."/>
            <person name="Wilming L.G."/>
            <person name="Aidinis V."/>
            <person name="Allen J.E."/>
            <person name="Ambesi-Impiombato A."/>
            <person name="Apweiler R."/>
            <person name="Aturaliya R.N."/>
            <person name="Bailey T.L."/>
            <person name="Bansal M."/>
            <person name="Baxter L."/>
            <person name="Beisel K.W."/>
            <person name="Bersano T."/>
            <person name="Bono H."/>
            <person name="Chalk A.M."/>
            <person name="Chiu K.P."/>
            <person name="Choudhary V."/>
            <person name="Christoffels A."/>
            <person name="Clutterbuck D.R."/>
            <person name="Crowe M.L."/>
            <person name="Dalla E."/>
            <person name="Dalrymple B.P."/>
            <person name="de Bono B."/>
            <person name="Della Gatta G."/>
            <person name="di Bernardo D."/>
            <person name="Down T."/>
            <person name="Engstrom P."/>
            <person name="Fagiolini M."/>
            <person name="Faulkner G."/>
            <person name="Fletcher C.F."/>
            <person name="Fukushima T."/>
            <person name="Furuno M."/>
            <person name="Futaki S."/>
            <person name="Gariboldi M."/>
            <person name="Georgii-Hemming P."/>
            <person name="Gingeras T.R."/>
            <person name="Gojobori T."/>
            <person name="Green R.E."/>
            <person name="Gustincich S."/>
            <person name="Harbers M."/>
            <person name="Hayashi Y."/>
            <person name="Hensch T.K."/>
            <person name="Hirokawa N."/>
            <person name="Hill D."/>
            <person name="Huminiecki L."/>
            <person name="Iacono M."/>
            <person name="Ikeo K."/>
            <person name="Iwama A."/>
            <person name="Ishikawa T."/>
            <person name="Jakt M."/>
            <person name="Kanapin A."/>
            <person name="Katoh M."/>
            <person name="Kawasawa Y."/>
            <person name="Kelso J."/>
            <person name="Kitamura H."/>
            <person name="Kitano H."/>
            <person name="Kollias G."/>
            <person name="Krishnan S.P."/>
            <person name="Kruger A."/>
            <person name="Kummerfeld S.K."/>
            <person name="Kurochkin I.V."/>
            <person name="Lareau L.F."/>
            <person name="Lazarevic D."/>
            <person name="Lipovich L."/>
            <person name="Liu J."/>
            <person name="Liuni S."/>
            <person name="McWilliam S."/>
            <person name="Madan Babu M."/>
            <person name="Madera M."/>
            <person name="Marchionni L."/>
            <person name="Matsuda H."/>
            <person name="Matsuzawa S."/>
            <person name="Miki H."/>
            <person name="Mignone F."/>
            <person name="Miyake S."/>
            <person name="Morris K."/>
            <person name="Mottagui-Tabar S."/>
            <person name="Mulder N."/>
            <person name="Nakano N."/>
            <person name="Nakauchi H."/>
            <person name="Ng P."/>
            <person name="Nilsson R."/>
            <person name="Nishiguchi S."/>
            <person name="Nishikawa S."/>
            <person name="Nori F."/>
            <person name="Ohara O."/>
            <person name="Okazaki Y."/>
            <person name="Orlando V."/>
            <person name="Pang K.C."/>
            <person name="Pavan W.J."/>
            <person name="Pavesi G."/>
            <person name="Pesole G."/>
            <person name="Petrovsky N."/>
            <person name="Piazza S."/>
            <person name="Reed J."/>
            <person name="Reid J.F."/>
            <person name="Ring B.Z."/>
            <person name="Ringwald M."/>
            <person name="Rost B."/>
            <person name="Ruan Y."/>
            <person name="Salzberg S.L."/>
            <person name="Sandelin A."/>
            <person name="Schneider C."/>
            <person name="Schoenbach C."/>
            <person name="Sekiguchi K."/>
            <person name="Semple C.A."/>
            <person name="Seno S."/>
            <person name="Sessa L."/>
            <person name="Sheng Y."/>
            <person name="Shibata Y."/>
            <person name="Shimada H."/>
            <person name="Shimada K."/>
            <person name="Silva D."/>
            <person name="Sinclair B."/>
            <person name="Sperling S."/>
            <person name="Stupka E."/>
            <person name="Sugiura K."/>
            <person name="Sultana R."/>
            <person name="Takenaka Y."/>
            <person name="Taki K."/>
            <person name="Tammoja K."/>
            <person name="Tan S.L."/>
            <person name="Tang S."/>
            <person name="Taylor M.S."/>
            <person name="Tegner J."/>
            <person name="Teichmann S.A."/>
            <person name="Ueda H.R."/>
            <person name="van Nimwegen E."/>
            <person name="Verardo R."/>
            <person name="Wei C.L."/>
            <person name="Yagi K."/>
            <person name="Yamanishi H."/>
            <person name="Zabarovsky E."/>
            <person name="Zhu S."/>
            <person name="Zimmer A."/>
            <person name="Hide W."/>
            <person name="Bult C."/>
            <person name="Grimmond S.M."/>
            <person name="Teasdale R.D."/>
            <person name="Liu E.T."/>
            <person name="Brusic V."/>
            <person name="Quackenbush J."/>
            <person name="Wahlestedt C."/>
            <person name="Mattick J.S."/>
            <person name="Hume D.A."/>
            <person name="Kai C."/>
            <person name="Sasaki D."/>
            <person name="Tomaru Y."/>
            <person name="Fukuda S."/>
            <person name="Kanamori-Katayama M."/>
            <person name="Suzuki M."/>
            <person name="Aoki J."/>
            <person name="Arakawa T."/>
            <person name="Iida J."/>
            <person name="Imamura K."/>
            <person name="Itoh M."/>
            <person name="Kato T."/>
            <person name="Kawaji H."/>
            <person name="Kawagashira N."/>
            <person name="Kawashima T."/>
            <person name="Kojima M."/>
            <person name="Kondo S."/>
            <person name="Konno H."/>
            <person name="Nakano K."/>
            <person name="Ninomiya N."/>
            <person name="Nishio T."/>
            <person name="Okada M."/>
            <person name="Plessy C."/>
            <person name="Shibata K."/>
            <person name="Shiraki T."/>
            <person name="Suzuki S."/>
            <person name="Tagami M."/>
            <person name="Waki K."/>
            <person name="Watahiki A."/>
            <person name="Okamura-Oho Y."/>
            <person name="Suzuki H."/>
            <person name="Kawai J."/>
            <person name="Hayashizaki Y."/>
        </authorList>
    </citation>
    <scope>NUCLEOTIDE SEQUENCE [LARGE SCALE MRNA] (ISOFORM 1)</scope>
    <source>
        <strain>C57BL/6J</strain>
        <tissue>Oviduct</tissue>
    </source>
</reference>
<reference key="2">
    <citation type="journal article" date="2004" name="Genome Res.">
        <title>The status, quality, and expansion of the NIH full-length cDNA project: the Mammalian Gene Collection (MGC).</title>
        <authorList>
            <consortium name="The MGC Project Team"/>
        </authorList>
    </citation>
    <scope>NUCLEOTIDE SEQUENCE [LARGE SCALE MRNA] (ISOFORMS 1 AND 2)</scope>
    <source>
        <strain>FVB/N</strain>
        <tissue>Colon</tissue>
        <tissue>Mammary tumor</tissue>
    </source>
</reference>
<reference key="3">
    <citation type="thesis" date="2001" institute="University of Hannover" country="Germany">
        <title>Cloning and characterization of mammalian homologs of unc-93 from Caenorhabditis elegans, a protein relevant for muscle contraction.</title>
        <authorList>
            <person name="Kollewe A."/>
        </authorList>
    </citation>
    <scope>NUCLEOTIDE SEQUENCE [MRNA] OF 264-315 (ISOFORM 1)</scope>
    <source>
        <strain>C57BL/6 X CBA</strain>
        <tissue>Spleen</tissue>
    </source>
</reference>
<reference key="4">
    <citation type="journal article" date="1998" name="Mol. Immunol.">
        <title>Expressed genes in interleukin-4 treated B cells identified by cDNA representational difference analysis.</title>
        <authorList>
            <person name="Chu C.C."/>
            <person name="Paul W.E."/>
        </authorList>
    </citation>
    <scope>NUCLEOTIDE SEQUENCE [MRNA] OF 317-434 (ISOFORM 1)</scope>
    <scope>INDUCTION</scope>
    <source>
        <strain>BALB/cJ</strain>
        <tissue>Spleen</tissue>
    </source>
</reference>
<reference key="5">
    <citation type="journal article" date="2006" name="Nat. Immunol.">
        <title>The Unc93b1 mutation 3d disrupts exogenous antigen presentation and signaling via Toll-like receptors 3, 7 and 9.</title>
        <authorList>
            <person name="Tabeta K."/>
            <person name="Hoebe K."/>
            <person name="Janssen E.M."/>
            <person name="Du X."/>
            <person name="Georgel P."/>
            <person name="Crozat K."/>
            <person name="Mudd S."/>
            <person name="Mann N."/>
            <person name="Sovath S."/>
            <person name="Goode J."/>
            <person name="Shamel L."/>
            <person name="Herskovits A.A."/>
            <person name="Portnoy D.A."/>
            <person name="Cooke M."/>
            <person name="Tarantino L.M."/>
            <person name="Wiltshire T."/>
            <person name="Steinberg B.E."/>
            <person name="Grinstein S."/>
            <person name="Beutler B."/>
        </authorList>
    </citation>
    <scope>FUNCTION</scope>
    <scope>MUTAGENESIS OF HIS-412</scope>
    <scope>SUBCELLULAR LOCATION</scope>
</reference>
<reference key="6">
    <citation type="journal article" date="2007" name="J. Cell Biol.">
        <title>The interaction between the ER membrane protein UNC93B and TLR3, 7, and 9 is crucial for TLR signaling.</title>
        <authorList>
            <person name="Brinkmann M.M."/>
            <person name="Spooner E."/>
            <person name="Hoebe K."/>
            <person name="Beutler B."/>
            <person name="Ploegh H.L."/>
            <person name="Kim Y.M."/>
        </authorList>
    </citation>
    <scope>FUNCTION</scope>
    <scope>SUBCELLULAR LOCATION</scope>
    <scope>GLYCOSYLATION</scope>
    <scope>INTERACTION WITH TLR3; TLR7; TLR9 AND TLR13</scope>
</reference>
<reference key="7">
    <citation type="journal article" date="2008" name="Nature">
        <title>UNC93B1 delivers nucleotide-sensing toll-like receptors to endolysosomes.</title>
        <authorList>
            <person name="Kim Y.M."/>
            <person name="Brinkmann M.M."/>
            <person name="Paquet M.E."/>
            <person name="Ploegh H.L."/>
        </authorList>
    </citation>
    <scope>FUNCTION</scope>
    <scope>SUBCELLULAR LOCATION</scope>
</reference>
<reference key="8">
    <citation type="journal article" date="2009" name="J. Exp. Med.">
        <title>Unc93B1 biases Toll-like receptor responses to nucleic acid in dendritic cells toward DNA- but against RNA-sensing.</title>
        <authorList>
            <person name="Fukui R."/>
            <person name="Saitoh S."/>
            <person name="Matsumoto F."/>
            <person name="Kozuka-Hata H."/>
            <person name="Oyama M."/>
            <person name="Tabeta K."/>
            <person name="Beutler B."/>
            <person name="Miyake K."/>
        </authorList>
    </citation>
    <scope>MUTAGENESIS OF ASP-34</scope>
    <scope>INTERACTION WITH TLR7; TLR8 AND TLR13</scope>
</reference>
<reference key="9">
    <citation type="journal article" date="2010" name="Cell">
        <title>A tissue-specific atlas of mouse protein phosphorylation and expression.</title>
        <authorList>
            <person name="Huttlin E.L."/>
            <person name="Jedrychowski M.P."/>
            <person name="Elias J.E."/>
            <person name="Goswami T."/>
            <person name="Rad R."/>
            <person name="Beausoleil S.A."/>
            <person name="Villen J."/>
            <person name="Haas W."/>
            <person name="Sowa M.E."/>
            <person name="Gygi S.P."/>
        </authorList>
    </citation>
    <scope>IDENTIFICATION BY MASS SPECTROMETRY [LARGE SCALE ANALYSIS]</scope>
    <source>
        <tissue>Kidney</tissue>
        <tissue>Lung</tissue>
        <tissue>Spleen</tissue>
    </source>
</reference>
<reference evidence="14" key="10">
    <citation type="journal article" date="2021" name="Nat. Struct. Mol. Biol.">
        <title>Cryo-EM structures of Toll-like receptors in complex with UNC93B1.</title>
        <authorList>
            <person name="Ishida H."/>
            <person name="Asami J."/>
            <person name="Zhang Z."/>
            <person name="Nishizawa T."/>
            <person name="Shigematsu H."/>
            <person name="Ohto U."/>
            <person name="Shimizu T."/>
        </authorList>
    </citation>
    <scope>STRUCTURE BY ELECTRON MICROSCOPY (3.30 ANGSTROMS) IN COMPLEX WITH TLR3</scope>
    <scope>INTERACTION WITH TLR3</scope>
    <scope>MUTAGENESIS OF PHE-133; TRP-137; PHE-140; ALA-147; LEU-148; SER-151; TYR-154; TRP-155; THR-160; ARG-281; SER-282; ILE-286; PHE-297 AND MET-300</scope>
</reference>